<sequence length="134" mass="16062">MTIRPAYRPKIIKKRTKHFIRHQSDRYAKLSHKWRKPKGIDNRVRRRFKGQYLMPNIGYGSNKRTRHMLPTGFKKFLVHNVRELEVLLMQNRVYCGEIAHAVSSKKRKEIVERAKQLSIRLTNPNGRLRSQENE</sequence>
<reference key="1">
    <citation type="journal article" date="1993" name="J. Mol. Evol.">
        <title>Nucleotide divergence of the rp49 gene region between Drosophila melanogaster and two species of the Obscura group of Drosophila.</title>
        <authorList>
            <person name="Segarra C."/>
            <person name="Aguade M."/>
        </authorList>
    </citation>
    <scope>NUCLEOTIDE SEQUENCE [GENOMIC DNA]</scope>
</reference>
<reference key="2">
    <citation type="journal article" date="2005" name="Genetics">
        <title>Patterns of selection on synonymous and nonsynonymous variants in Drosophila miranda.</title>
        <authorList>
            <person name="Bartolome C."/>
            <person name="Maside X."/>
            <person name="Yi S."/>
            <person name="Grant A.L."/>
            <person name="Charlesworth B."/>
        </authorList>
    </citation>
    <scope>NUCLEOTIDE SEQUENCE [GENOMIC DNA]</scope>
</reference>
<reference key="3">
    <citation type="journal article" date="2005" name="Genome Res.">
        <title>Comparative genome sequencing of Drosophila pseudoobscura: chromosomal, gene, and cis-element evolution.</title>
        <authorList>
            <person name="Richards S."/>
            <person name="Liu Y."/>
            <person name="Bettencourt B.R."/>
            <person name="Hradecky P."/>
            <person name="Letovsky S."/>
            <person name="Nielsen R."/>
            <person name="Thornton K."/>
            <person name="Hubisz M.J."/>
            <person name="Chen R."/>
            <person name="Meisel R.P."/>
            <person name="Couronne O."/>
            <person name="Hua S."/>
            <person name="Smith M.A."/>
            <person name="Zhang P."/>
            <person name="Liu J."/>
            <person name="Bussemaker H.J."/>
            <person name="van Batenburg M.F."/>
            <person name="Howells S.L."/>
            <person name="Scherer S.E."/>
            <person name="Sodergren E."/>
            <person name="Matthews B.B."/>
            <person name="Crosby M.A."/>
            <person name="Schroeder A.J."/>
            <person name="Ortiz-Barrientos D."/>
            <person name="Rives C.M."/>
            <person name="Metzker M.L."/>
            <person name="Muzny D.M."/>
            <person name="Scott G."/>
            <person name="Steffen D."/>
            <person name="Wheeler D.A."/>
            <person name="Worley K.C."/>
            <person name="Havlak P."/>
            <person name="Durbin K.J."/>
            <person name="Egan A."/>
            <person name="Gill R."/>
            <person name="Hume J."/>
            <person name="Morgan M.B."/>
            <person name="Miner G."/>
            <person name="Hamilton C."/>
            <person name="Huang Y."/>
            <person name="Waldron L."/>
            <person name="Verduzco D."/>
            <person name="Clerc-Blankenburg K.P."/>
            <person name="Dubchak I."/>
            <person name="Noor M.A.F."/>
            <person name="Anderson W."/>
            <person name="White K.P."/>
            <person name="Clark A.G."/>
            <person name="Schaeffer S.W."/>
            <person name="Gelbart W.M."/>
            <person name="Weinstock G.M."/>
            <person name="Gibbs R.A."/>
        </authorList>
    </citation>
    <scope>NUCLEOTIDE SEQUENCE [LARGE SCALE GENOMIC DNA]</scope>
    <source>
        <strain>MV2-25 / Tucson 14011-0121.94</strain>
    </source>
</reference>
<comment type="similarity">
    <text evidence="1">Belongs to the eukaryotic ribosomal protein eL32 family.</text>
</comment>
<keyword id="KW-1185">Reference proteome</keyword>
<keyword id="KW-0687">Ribonucleoprotein</keyword>
<keyword id="KW-0689">Ribosomal protein</keyword>
<organism>
    <name type="scientific">Drosophila pseudoobscura pseudoobscura</name>
    <name type="common">Fruit fly</name>
    <dbReference type="NCBI Taxonomy" id="46245"/>
    <lineage>
        <taxon>Eukaryota</taxon>
        <taxon>Metazoa</taxon>
        <taxon>Ecdysozoa</taxon>
        <taxon>Arthropoda</taxon>
        <taxon>Hexapoda</taxon>
        <taxon>Insecta</taxon>
        <taxon>Pterygota</taxon>
        <taxon>Neoptera</taxon>
        <taxon>Endopterygota</taxon>
        <taxon>Diptera</taxon>
        <taxon>Brachycera</taxon>
        <taxon>Muscomorpha</taxon>
        <taxon>Ephydroidea</taxon>
        <taxon>Drosophilidae</taxon>
        <taxon>Drosophila</taxon>
        <taxon>Sophophora</taxon>
    </lineage>
</organism>
<dbReference type="EMBL" id="S59382">
    <property type="protein sequence ID" value="AAB26418.1"/>
    <property type="molecule type" value="Genomic_DNA"/>
</dbReference>
<dbReference type="EMBL" id="AY754568">
    <property type="protein sequence ID" value="AAX13143.1"/>
    <property type="molecule type" value="Genomic_DNA"/>
</dbReference>
<dbReference type="EMBL" id="CM000070">
    <property type="protein sequence ID" value="EAL26773.2"/>
    <property type="molecule type" value="Genomic_DNA"/>
</dbReference>
<dbReference type="RefSeq" id="XP_003736222.1">
    <property type="nucleotide sequence ID" value="XM_003736174.2"/>
</dbReference>
<dbReference type="SMR" id="P84323"/>
<dbReference type="FunCoup" id="P84323">
    <property type="interactions" value="1766"/>
</dbReference>
<dbReference type="STRING" id="46245.P84323"/>
<dbReference type="EnsemblMetazoa" id="FBtr0380341">
    <property type="protein sequence ID" value="FBpp0340789"/>
    <property type="gene ID" value="FBgn0012704"/>
</dbReference>
<dbReference type="GeneID" id="4800249"/>
<dbReference type="KEGG" id="dpo:4800249"/>
<dbReference type="CTD" id="6161"/>
<dbReference type="eggNOG" id="KOG0878">
    <property type="taxonomic scope" value="Eukaryota"/>
</dbReference>
<dbReference type="HOGENOM" id="CLU_071479_4_1_1"/>
<dbReference type="InParanoid" id="P84323"/>
<dbReference type="OMA" id="ENCAHEF"/>
<dbReference type="ChiTaRS" id="RpL32">
    <property type="organism name" value="fly"/>
</dbReference>
<dbReference type="Proteomes" id="UP000001819">
    <property type="component" value="Chromosome 2"/>
</dbReference>
<dbReference type="Bgee" id="FBgn0012704">
    <property type="expression patterns" value="Expressed in female reproductive system and 2 other cell types or tissues"/>
</dbReference>
<dbReference type="GO" id="GO:0022625">
    <property type="term" value="C:cytosolic large ribosomal subunit"/>
    <property type="evidence" value="ECO:0007669"/>
    <property type="project" value="TreeGrafter"/>
</dbReference>
<dbReference type="GO" id="GO:0003735">
    <property type="term" value="F:structural constituent of ribosome"/>
    <property type="evidence" value="ECO:0007669"/>
    <property type="project" value="InterPro"/>
</dbReference>
<dbReference type="GO" id="GO:0006412">
    <property type="term" value="P:translation"/>
    <property type="evidence" value="ECO:0007669"/>
    <property type="project" value="InterPro"/>
</dbReference>
<dbReference type="CDD" id="cd00513">
    <property type="entry name" value="Ribosomal_L32_L32e"/>
    <property type="match status" value="1"/>
</dbReference>
<dbReference type="InterPro" id="IPR001515">
    <property type="entry name" value="Ribosomal_eL32"/>
</dbReference>
<dbReference type="InterPro" id="IPR018263">
    <property type="entry name" value="Ribosomal_eL32_CS"/>
</dbReference>
<dbReference type="InterPro" id="IPR036351">
    <property type="entry name" value="Ribosomal_eL32_sf"/>
</dbReference>
<dbReference type="PANTHER" id="PTHR23413">
    <property type="entry name" value="60S RIBOSOMAL PROTEIN L32 AND DNA-DIRECTED RNA POLYMERASE II, SUBUNIT N"/>
    <property type="match status" value="1"/>
</dbReference>
<dbReference type="PANTHER" id="PTHR23413:SF1">
    <property type="entry name" value="RIBOSOMAL PROTEIN L32"/>
    <property type="match status" value="1"/>
</dbReference>
<dbReference type="Pfam" id="PF01655">
    <property type="entry name" value="Ribosomal_L32e"/>
    <property type="match status" value="1"/>
</dbReference>
<dbReference type="SMART" id="SM01393">
    <property type="entry name" value="Ribosomal_L32e"/>
    <property type="match status" value="1"/>
</dbReference>
<dbReference type="SUPFAM" id="SSF52042">
    <property type="entry name" value="Ribosomal protein L32e"/>
    <property type="match status" value="1"/>
</dbReference>
<dbReference type="PROSITE" id="PS00580">
    <property type="entry name" value="RIBOSOMAL_L32E"/>
    <property type="match status" value="1"/>
</dbReference>
<proteinExistence type="inferred from homology"/>
<accession>P84323</accession>
<accession>P46615</accession>
<accession>Q29C73</accession>
<accession>Q56RD9</accession>
<evidence type="ECO:0000305" key="1"/>
<protein>
    <recommendedName>
        <fullName evidence="1">Large ribosomal subunit protein eL32</fullName>
    </recommendedName>
    <alternativeName>
        <fullName>60S ribosomal protein L32</fullName>
    </alternativeName>
    <alternativeName>
        <fullName>Ribosomal protein 49</fullName>
    </alternativeName>
</protein>
<feature type="chain" id="PRO_0000131131" description="Large ribosomal subunit protein eL32">
    <location>
        <begin position="1"/>
        <end position="134"/>
    </location>
</feature>
<gene>
    <name type="primary">RpL32</name>
    <name type="synonym">M(3)99D</name>
    <name type="synonym">rp49</name>
    <name type="ORF">GA20704</name>
</gene>
<name>RL32_DROPS</name>